<accession>Q84459</accession>
<organism evidence="5 6">
    <name type="scientific">Paramecium bursaria Chlorella virus 1</name>
    <name type="common">PBCV-1</name>
    <dbReference type="NCBI Taxonomy" id="10506"/>
    <lineage>
        <taxon>Viruses</taxon>
        <taxon>Varidnaviria</taxon>
        <taxon>Bamfordvirae</taxon>
        <taxon>Nucleocytoviricota</taxon>
        <taxon>Megaviricetes</taxon>
        <taxon>Algavirales</taxon>
        <taxon>Phycodnaviridae</taxon>
        <taxon>Chlorovirus</taxon>
    </lineage>
</organism>
<protein>
    <recommendedName>
        <fullName>Minor capsid protein P12</fullName>
    </recommendedName>
</protein>
<name>P12_PBCV1</name>
<reference key="1">
    <citation type="journal article" date="1996" name="Virology">
        <title>Analysis of 76 kb of the chlorella virus PBCV-1 330-kb genome: map positions 182 to 258.</title>
        <authorList>
            <person name="Kutish G.F."/>
            <person name="Li Y."/>
            <person name="Lu Z."/>
            <person name="Furuta M."/>
            <person name="Rock D.L."/>
            <person name="van Etten J.L."/>
        </authorList>
    </citation>
    <scope>NUCLEOTIDE SEQUENCE [LARGE SCALE GENOMIC DNA]</scope>
</reference>
<reference key="2">
    <citation type="journal article" date="2010" name="J. Virol.">
        <title>Microarray analysis of Paramecium bursaria chlorella virus 1 transcription.</title>
        <authorList>
            <person name="Yanai-Balser G.M."/>
            <person name="Duncan G.A."/>
            <person name="Eudy J.D."/>
            <person name="Wang D."/>
            <person name="Li X."/>
            <person name="Agarkova I.V."/>
            <person name="Dunigan D.D."/>
            <person name="Van Etten J.L."/>
        </authorList>
    </citation>
    <scope>INDUCTION</scope>
</reference>
<reference evidence="7" key="3">
    <citation type="journal article" date="2019" name="Nat. Commun.">
        <title>Near-atomic structure of a giant virus.</title>
        <authorList>
            <person name="Fang Q."/>
            <person name="Zhu D."/>
            <person name="Agarkova I."/>
            <person name="Adhikari J."/>
            <person name="Klose T."/>
            <person name="Liu Y."/>
            <person name="Chen Z."/>
            <person name="Sun Y."/>
            <person name="Gross M.L."/>
            <person name="Van Etten J.L."/>
            <person name="Zhang X."/>
            <person name="Rossmann M.G."/>
        </authorList>
    </citation>
    <scope>STRUCTURE BY ELECTRON MICROSCOPY (3.50 ANGSTROMS)</scope>
    <scope>DISULFIDE BOND</scope>
    <scope>FUNCTION</scope>
    <scope>SUBCELLULAR LOCATION</scope>
    <scope>INTERACTION WITH THE MAJOR CAPSID PROTEIN</scope>
</reference>
<reference evidence="8" key="4">
    <citation type="journal article" date="2022" name="Nat. Commun.">
        <title>Near-atomic, non-icosahedrally averaged structure of giant virus Paramecium bursaria chlorella virus 1.</title>
        <authorList>
            <person name="Shao Q."/>
            <person name="Agarkova I.V."/>
            <person name="Noel E.A."/>
            <person name="Dunigan D.D."/>
            <person name="Liu Y."/>
            <person name="Wang A."/>
            <person name="Guo M."/>
            <person name="Xie L."/>
            <person name="Zhao X."/>
            <person name="Rossmann M.G."/>
            <person name="Van Etten J.L."/>
            <person name="Klose T."/>
            <person name="Fang Q."/>
        </authorList>
    </citation>
    <scope>STRUCTURE BY ELECTRON MICROSCOPY (3.80 ANGSTROMS)</scope>
</reference>
<feature type="chain" id="PRO_0000460578" description="Minor capsid protein P12">
    <location>
        <begin position="1"/>
        <end position="151"/>
    </location>
</feature>
<feature type="region of interest" description="Hydrophobic" evidence="3">
    <location>
        <begin position="23"/>
        <end position="43"/>
    </location>
</feature>
<feature type="region of interest" description="Hydrophobic" evidence="3">
    <location>
        <begin position="46"/>
        <end position="66"/>
    </location>
</feature>
<feature type="disulfide bond" evidence="2">
    <location>
        <begin position="112"/>
        <end position="120"/>
    </location>
</feature>
<proteinExistence type="evidence at protein level"/>
<keyword id="KW-0002">3D-structure</keyword>
<keyword id="KW-0167">Capsid protein</keyword>
<keyword id="KW-1015">Disulfide bond</keyword>
<keyword id="KW-0426">Late protein</keyword>
<keyword id="KW-1185">Reference proteome</keyword>
<keyword id="KW-0946">Virion</keyword>
<organismHost>
    <name type="scientific">Chlorella</name>
    <dbReference type="NCBI Taxonomy" id="3071"/>
</organismHost>
<comment type="function">
    <text evidence="2">One of the minor capsid proteins that constitute a network internal to the major capsid proteins and outside the lipid membrane (PubMed:30674888). The minor capsid protein P12 does not serve a cross-linking function between neighboring capsomers, it may play a role in the viral capsid assembly (PubMed:30674888).</text>
</comment>
<comment type="subunit">
    <text evidence="2">Interacts with the major capsid protein.</text>
</comment>
<comment type="subcellular location">
    <subcellularLocation>
        <location evidence="2">Virion</location>
    </subcellularLocation>
</comment>
<comment type="induction">
    <text evidence="1">Expressed in the late phase of the viral replicative cycle.</text>
</comment>
<comment type="domain">
    <text evidence="4">The hydrophobic regions might anchor the protein in the underlying inner membrane.</text>
</comment>
<evidence type="ECO:0000269" key="1">
    <source>
    </source>
</evidence>
<evidence type="ECO:0000269" key="2">
    <source>
    </source>
</evidence>
<evidence type="ECO:0000305" key="3"/>
<evidence type="ECO:0000305" key="4">
    <source>
    </source>
</evidence>
<evidence type="ECO:0000312" key="5">
    <source>
        <dbReference type="EMBL" id="AAC96507.2"/>
    </source>
</evidence>
<evidence type="ECO:0000312" key="6">
    <source>
        <dbReference type="Proteomes" id="UP000000862"/>
    </source>
</evidence>
<evidence type="ECO:0007744" key="7">
    <source>
        <dbReference type="PDB" id="6NCL"/>
    </source>
</evidence>
<evidence type="ECO:0007744" key="8">
    <source>
        <dbReference type="PDB" id="8H2I"/>
    </source>
</evidence>
<sequence>MGNGPPMERAVSSDDILTYYNTFIFFIYFNFTNENIYIIYTIYMKVQNTIVYIVLLLIVVVIIWNFTRKEGWSDYNAPNDFMKIYYSNIVEDKKLAEKYPFFGTGPFTGLRCRKPNNVGCNTTWVSGQLVELTPKLKEQIECKFGIQYVKT</sequence>
<gene>
    <name evidence="5" type="primary">A139L</name>
</gene>
<dbReference type="EMBL" id="JF411744">
    <property type="protein sequence ID" value="AAC96507.2"/>
    <property type="molecule type" value="Genomic_DNA"/>
</dbReference>
<dbReference type="RefSeq" id="NP_048487.2">
    <property type="nucleotide sequence ID" value="NC_000852.5"/>
</dbReference>
<dbReference type="PDB" id="6NCL">
    <property type="method" value="EM"/>
    <property type="resolution" value="3.50 A"/>
    <property type="chains" value="a7=1-151"/>
</dbReference>
<dbReference type="PDB" id="8H2I">
    <property type="method" value="EM"/>
    <property type="resolution" value="3.80 A"/>
    <property type="chains" value="cf=1-151"/>
</dbReference>
<dbReference type="PDBsum" id="6NCL"/>
<dbReference type="PDBsum" id="8H2I"/>
<dbReference type="EMDB" id="EMD-0436"/>
<dbReference type="EMDB" id="EMD-34438"/>
<dbReference type="SMR" id="Q84459"/>
<dbReference type="GeneID" id="917820"/>
<dbReference type="KEGG" id="vg:917820"/>
<dbReference type="OrthoDB" id="21390at10239"/>
<dbReference type="Proteomes" id="UP000000862">
    <property type="component" value="Genome"/>
</dbReference>
<dbReference type="GO" id="GO:0019028">
    <property type="term" value="C:viral capsid"/>
    <property type="evidence" value="ECO:0007669"/>
    <property type="project" value="UniProtKB-KW"/>
</dbReference>